<protein>
    <recommendedName>
        <fullName evidence="3">Putative beta-neurotoxin RjAa15f</fullName>
    </recommendedName>
</protein>
<proteinExistence type="inferred from homology"/>
<keyword id="KW-1015">Disulfide bond</keyword>
<keyword id="KW-0872">Ion channel impairing toxin</keyword>
<keyword id="KW-0528">Neurotoxin</keyword>
<keyword id="KW-0964">Secreted</keyword>
<keyword id="KW-0732">Signal</keyword>
<keyword id="KW-0800">Toxin</keyword>
<keyword id="KW-0738">Voltage-gated sodium channel impairing toxin</keyword>
<accession>E7CLP4</accession>
<evidence type="ECO:0000250" key="1"/>
<evidence type="ECO:0000250" key="2">
    <source>
        <dbReference type="UniProtKB" id="P15226"/>
    </source>
</evidence>
<evidence type="ECO:0000250" key="3">
    <source>
        <dbReference type="UniProtKB" id="Q1I176"/>
    </source>
</evidence>
<evidence type="ECO:0000255" key="4"/>
<evidence type="ECO:0000255" key="5">
    <source>
        <dbReference type="PROSITE-ProRule" id="PRU01210"/>
    </source>
</evidence>
<evidence type="ECO:0000305" key="6"/>
<evidence type="ECO:0000305" key="7">
    <source>
    </source>
</evidence>
<evidence type="ECO:0000312" key="8">
    <source>
        <dbReference type="EMBL" id="ADV16831.1"/>
    </source>
</evidence>
<reference evidence="8" key="1">
    <citation type="journal article" date="2011" name="Toxicon">
        <title>Biochemical and molecular characterization of the venom from the Cuban scorpion Rhopalurus junceus.</title>
        <authorList>
            <person name="Garcia-Gomez B.I."/>
            <person name="Coronas F.I."/>
            <person name="Restano-Cassulini R."/>
            <person name="Rodriguez R.R."/>
            <person name="Possani L.D."/>
        </authorList>
    </citation>
    <scope>NUCLEOTIDE SEQUENCE [MRNA]</scope>
    <source>
        <tissue evidence="8">Venom gland</tissue>
    </source>
</reference>
<sequence>MKILIFIIASFMLIGVECKEGYPMGRNGCKIPCAINDNICKVECQAKWKQSDGYCYSWGLSCYCTNLLEDAEVWDSSNNKCVG</sequence>
<feature type="signal peptide" evidence="4">
    <location>
        <begin position="1"/>
        <end position="18"/>
    </location>
</feature>
<feature type="chain" id="PRO_0000413467" description="Putative beta-neurotoxin RjAa15f" evidence="4">
    <location>
        <begin position="19"/>
        <end position="83"/>
    </location>
</feature>
<feature type="domain" description="LCN-type CS-alpha/beta" evidence="5">
    <location>
        <begin position="19"/>
        <end position="82"/>
    </location>
</feature>
<feature type="disulfide bond" evidence="5">
    <location>
        <begin position="29"/>
        <end position="81"/>
    </location>
</feature>
<feature type="disulfide bond" evidence="5">
    <location>
        <begin position="33"/>
        <end position="55"/>
    </location>
</feature>
<feature type="disulfide bond" evidence="5">
    <location>
        <begin position="40"/>
        <end position="62"/>
    </location>
</feature>
<feature type="disulfide bond" evidence="5">
    <location>
        <begin position="44"/>
        <end position="64"/>
    </location>
</feature>
<dbReference type="EMBL" id="HM233953">
    <property type="protein sequence ID" value="ADV16831.1"/>
    <property type="molecule type" value="mRNA"/>
</dbReference>
<dbReference type="SMR" id="E7CLP4"/>
<dbReference type="GO" id="GO:0005576">
    <property type="term" value="C:extracellular region"/>
    <property type="evidence" value="ECO:0007669"/>
    <property type="project" value="UniProtKB-SubCell"/>
</dbReference>
<dbReference type="GO" id="GO:0019871">
    <property type="term" value="F:sodium channel inhibitor activity"/>
    <property type="evidence" value="ECO:0007669"/>
    <property type="project" value="InterPro"/>
</dbReference>
<dbReference type="GO" id="GO:0090729">
    <property type="term" value="F:toxin activity"/>
    <property type="evidence" value="ECO:0007669"/>
    <property type="project" value="UniProtKB-KW"/>
</dbReference>
<dbReference type="CDD" id="cd23106">
    <property type="entry name" value="neurotoxins_LC_scorpion"/>
    <property type="match status" value="1"/>
</dbReference>
<dbReference type="FunFam" id="3.30.30.10:FF:000002">
    <property type="entry name" value="Alpha-like toxin BmK-M1"/>
    <property type="match status" value="1"/>
</dbReference>
<dbReference type="Gene3D" id="3.30.30.10">
    <property type="entry name" value="Knottin, scorpion toxin-like"/>
    <property type="match status" value="1"/>
</dbReference>
<dbReference type="InterPro" id="IPR044062">
    <property type="entry name" value="LCN-type_CS_alpha_beta_dom"/>
</dbReference>
<dbReference type="InterPro" id="IPR036574">
    <property type="entry name" value="Scorpion_toxin-like_sf"/>
</dbReference>
<dbReference type="InterPro" id="IPR018218">
    <property type="entry name" value="Scorpion_toxinL"/>
</dbReference>
<dbReference type="InterPro" id="IPR002061">
    <property type="entry name" value="Scorpion_toxinL/defensin"/>
</dbReference>
<dbReference type="Pfam" id="PF00537">
    <property type="entry name" value="Toxin_3"/>
    <property type="match status" value="1"/>
</dbReference>
<dbReference type="PRINTS" id="PR00285">
    <property type="entry name" value="SCORPNTOXIN"/>
</dbReference>
<dbReference type="SUPFAM" id="SSF57095">
    <property type="entry name" value="Scorpion toxin-like"/>
    <property type="match status" value="1"/>
</dbReference>
<dbReference type="PROSITE" id="PS51863">
    <property type="entry name" value="LCN_CSAB"/>
    <property type="match status" value="1"/>
</dbReference>
<name>SX15F_RHOJU</name>
<comment type="function">
    <text evidence="1">Beta toxins bind voltage-independently at site-4 of sodium channels (Nav) and shift the voltage of activation toward more negative potentials thereby affecting sodium channel activation and promoting spontaneous and repetitive firing.</text>
</comment>
<comment type="subcellular location">
    <subcellularLocation>
        <location evidence="2">Secreted</location>
    </subcellularLocation>
</comment>
<comment type="tissue specificity">
    <text evidence="7">Expressed by the venom gland.</text>
</comment>
<comment type="domain">
    <text evidence="6">Has the structural arrangement of an alpha-helix connected to antiparallel beta-sheets by disulfide bonds (CS-alpha/beta).</text>
</comment>
<comment type="similarity">
    <text evidence="4">Belongs to the long (4 C-C) scorpion toxin superfamily. Sodium channel inhibitor family. Beta subfamily.</text>
</comment>
<organism>
    <name type="scientific">Rhopalurus junceus</name>
    <name type="common">Caribbean blue scorpion</name>
    <dbReference type="NCBI Taxonomy" id="419285"/>
    <lineage>
        <taxon>Eukaryota</taxon>
        <taxon>Metazoa</taxon>
        <taxon>Ecdysozoa</taxon>
        <taxon>Arthropoda</taxon>
        <taxon>Chelicerata</taxon>
        <taxon>Arachnida</taxon>
        <taxon>Scorpiones</taxon>
        <taxon>Buthida</taxon>
        <taxon>Buthoidea</taxon>
        <taxon>Buthidae</taxon>
        <taxon>Rhopalurus</taxon>
    </lineage>
</organism>